<evidence type="ECO:0000255" key="1">
    <source>
        <dbReference type="PROSITE-ProRule" id="PRU00434"/>
    </source>
</evidence>
<evidence type="ECO:0000305" key="2"/>
<feature type="chain" id="PRO_0000093280" description="Uncharacterized ABC transporter ATP-binding protein TM_0352">
    <location>
        <begin position="1"/>
        <end position="234"/>
    </location>
</feature>
<feature type="domain" description="ABC transporter" evidence="1">
    <location>
        <begin position="5"/>
        <end position="234"/>
    </location>
</feature>
<feature type="binding site" evidence="1">
    <location>
        <begin position="41"/>
        <end position="48"/>
    </location>
    <ligand>
        <name>ATP</name>
        <dbReference type="ChEBI" id="CHEBI:30616"/>
    </ligand>
</feature>
<gene>
    <name type="ordered locus">TM_0352</name>
</gene>
<sequence length="234" mass="26254">MKKVMELVDVWKIYDLGEVKVEALRGVSFEVFEGEYVIIIGPSGSGKSTLLHILGCLDRPTKGKVLIEGEEVSRMGDRRLAQVRNRKIGFVFQSYNLLPRLTALENVELPMIYAGVPAKERKRRAKELLELVGLGDRLHHRPNQLSGGQQQRVAIARALANDPVFILADEPTGNLDTKTGEEILELFRKLHEMGKTLVVVTHNLEMVDEGTCIVRIRDGRIEGIERRGVVYGDT</sequence>
<dbReference type="EMBL" id="AE000512">
    <property type="protein sequence ID" value="AAD35439.1"/>
    <property type="molecule type" value="Genomic_DNA"/>
</dbReference>
<dbReference type="PIR" id="H72385">
    <property type="entry name" value="H72385"/>
</dbReference>
<dbReference type="RefSeq" id="NP_228163.1">
    <property type="nucleotide sequence ID" value="NC_000853.1"/>
</dbReference>
<dbReference type="RefSeq" id="WP_004083143.1">
    <property type="nucleotide sequence ID" value="NC_000853.1"/>
</dbReference>
<dbReference type="SMR" id="Q9WYI7"/>
<dbReference type="FunCoup" id="Q9WYI7">
    <property type="interactions" value="358"/>
</dbReference>
<dbReference type="STRING" id="243274.TM_0352"/>
<dbReference type="PaxDb" id="243274-THEMA_02955"/>
<dbReference type="EnsemblBacteria" id="AAD35439">
    <property type="protein sequence ID" value="AAD35439"/>
    <property type="gene ID" value="TM_0352"/>
</dbReference>
<dbReference type="KEGG" id="tma:TM0352"/>
<dbReference type="KEGG" id="tmi:THEMA_02955"/>
<dbReference type="KEGG" id="tmm:Tmari_0350"/>
<dbReference type="KEGG" id="tmw:THMA_0360"/>
<dbReference type="eggNOG" id="COG1136">
    <property type="taxonomic scope" value="Bacteria"/>
</dbReference>
<dbReference type="InParanoid" id="Q9WYI7"/>
<dbReference type="OrthoDB" id="9810992at2"/>
<dbReference type="Proteomes" id="UP000008183">
    <property type="component" value="Chromosome"/>
</dbReference>
<dbReference type="GO" id="GO:0005886">
    <property type="term" value="C:plasma membrane"/>
    <property type="evidence" value="ECO:0000318"/>
    <property type="project" value="GO_Central"/>
</dbReference>
<dbReference type="GO" id="GO:0005524">
    <property type="term" value="F:ATP binding"/>
    <property type="evidence" value="ECO:0007669"/>
    <property type="project" value="UniProtKB-KW"/>
</dbReference>
<dbReference type="GO" id="GO:0016887">
    <property type="term" value="F:ATP hydrolysis activity"/>
    <property type="evidence" value="ECO:0007669"/>
    <property type="project" value="InterPro"/>
</dbReference>
<dbReference type="GO" id="GO:0022857">
    <property type="term" value="F:transmembrane transporter activity"/>
    <property type="evidence" value="ECO:0000318"/>
    <property type="project" value="GO_Central"/>
</dbReference>
<dbReference type="GO" id="GO:0055085">
    <property type="term" value="P:transmembrane transport"/>
    <property type="evidence" value="ECO:0000318"/>
    <property type="project" value="GO_Central"/>
</dbReference>
<dbReference type="CDD" id="cd03255">
    <property type="entry name" value="ABC_MJ0796_LolCDE_FtsE"/>
    <property type="match status" value="1"/>
</dbReference>
<dbReference type="FunFam" id="3.40.50.300:FF:000032">
    <property type="entry name" value="Export ABC transporter ATP-binding protein"/>
    <property type="match status" value="1"/>
</dbReference>
<dbReference type="Gene3D" id="3.40.50.300">
    <property type="entry name" value="P-loop containing nucleotide triphosphate hydrolases"/>
    <property type="match status" value="1"/>
</dbReference>
<dbReference type="InterPro" id="IPR003593">
    <property type="entry name" value="AAA+_ATPase"/>
</dbReference>
<dbReference type="InterPro" id="IPR003439">
    <property type="entry name" value="ABC_transporter-like_ATP-bd"/>
</dbReference>
<dbReference type="InterPro" id="IPR017871">
    <property type="entry name" value="ABC_transporter-like_CS"/>
</dbReference>
<dbReference type="InterPro" id="IPR015854">
    <property type="entry name" value="ABC_transpr_LolD-like"/>
</dbReference>
<dbReference type="InterPro" id="IPR017911">
    <property type="entry name" value="MacB-like_ATP-bd"/>
</dbReference>
<dbReference type="InterPro" id="IPR027417">
    <property type="entry name" value="P-loop_NTPase"/>
</dbReference>
<dbReference type="PANTHER" id="PTHR24220:SF86">
    <property type="entry name" value="ABC TRANSPORTER ABCH.1"/>
    <property type="match status" value="1"/>
</dbReference>
<dbReference type="PANTHER" id="PTHR24220">
    <property type="entry name" value="IMPORT ATP-BINDING PROTEIN"/>
    <property type="match status" value="1"/>
</dbReference>
<dbReference type="Pfam" id="PF00005">
    <property type="entry name" value="ABC_tran"/>
    <property type="match status" value="1"/>
</dbReference>
<dbReference type="SMART" id="SM00382">
    <property type="entry name" value="AAA"/>
    <property type="match status" value="1"/>
</dbReference>
<dbReference type="SUPFAM" id="SSF52540">
    <property type="entry name" value="P-loop containing nucleoside triphosphate hydrolases"/>
    <property type="match status" value="1"/>
</dbReference>
<dbReference type="PROSITE" id="PS00211">
    <property type="entry name" value="ABC_TRANSPORTER_1"/>
    <property type="match status" value="1"/>
</dbReference>
<dbReference type="PROSITE" id="PS50893">
    <property type="entry name" value="ABC_TRANSPORTER_2"/>
    <property type="match status" value="1"/>
</dbReference>
<comment type="similarity">
    <text evidence="2">Belongs to the ABC transporter superfamily.</text>
</comment>
<accession>Q9WYI7</accession>
<keyword id="KW-0067">ATP-binding</keyword>
<keyword id="KW-0547">Nucleotide-binding</keyword>
<keyword id="KW-1185">Reference proteome</keyword>
<keyword id="KW-0813">Transport</keyword>
<name>Y352_THEMA</name>
<organism>
    <name type="scientific">Thermotoga maritima (strain ATCC 43589 / DSM 3109 / JCM 10099 / NBRC 100826 / MSB8)</name>
    <dbReference type="NCBI Taxonomy" id="243274"/>
    <lineage>
        <taxon>Bacteria</taxon>
        <taxon>Thermotogati</taxon>
        <taxon>Thermotogota</taxon>
        <taxon>Thermotogae</taxon>
        <taxon>Thermotogales</taxon>
        <taxon>Thermotogaceae</taxon>
        <taxon>Thermotoga</taxon>
    </lineage>
</organism>
<proteinExistence type="inferred from homology"/>
<reference key="1">
    <citation type="journal article" date="1999" name="Nature">
        <title>Evidence for lateral gene transfer between Archaea and Bacteria from genome sequence of Thermotoga maritima.</title>
        <authorList>
            <person name="Nelson K.E."/>
            <person name="Clayton R.A."/>
            <person name="Gill S.R."/>
            <person name="Gwinn M.L."/>
            <person name="Dodson R.J."/>
            <person name="Haft D.H."/>
            <person name="Hickey E.K."/>
            <person name="Peterson J.D."/>
            <person name="Nelson W.C."/>
            <person name="Ketchum K.A."/>
            <person name="McDonald L.A."/>
            <person name="Utterback T.R."/>
            <person name="Malek J.A."/>
            <person name="Linher K.D."/>
            <person name="Garrett M.M."/>
            <person name="Stewart A.M."/>
            <person name="Cotton M.D."/>
            <person name="Pratt M.S."/>
            <person name="Phillips C.A."/>
            <person name="Richardson D.L."/>
            <person name="Heidelberg J.F."/>
            <person name="Sutton G.G."/>
            <person name="Fleischmann R.D."/>
            <person name="Eisen J.A."/>
            <person name="White O."/>
            <person name="Salzberg S.L."/>
            <person name="Smith H.O."/>
            <person name="Venter J.C."/>
            <person name="Fraser C.M."/>
        </authorList>
    </citation>
    <scope>NUCLEOTIDE SEQUENCE [LARGE SCALE GENOMIC DNA]</scope>
    <source>
        <strain>ATCC 43589 / DSM 3109 / JCM 10099 / NBRC 100826 / MSB8</strain>
    </source>
</reference>
<protein>
    <recommendedName>
        <fullName>Uncharacterized ABC transporter ATP-binding protein TM_0352</fullName>
    </recommendedName>
</protein>